<reference key="1">
    <citation type="journal article" date="1991" name="Genes Dev.">
        <title>Novel murine homeo box gene on chromosome 1 expressed in specific hematopoietic lineages and during embryogenesis.</title>
        <authorList>
            <person name="Allen J.D."/>
            <person name="Lints T."/>
            <person name="Jenkins N.A."/>
            <person name="Copeland N.G."/>
            <person name="Strasser A."/>
            <person name="Harvey R.P."/>
            <person name="Adams J.M."/>
        </authorList>
    </citation>
    <scope>NUCLEOTIDE SEQUENCE [MRNA]</scope>
    <source>
        <strain>C57BL/6 X DBA/2J</strain>
    </source>
</reference>
<reference key="2">
    <citation type="journal article" date="2002" name="Nat. Immunol.">
        <title>Hlx is induced by and genetically interacts with T-bet to promote heritable T(H)1 gene induction.</title>
        <authorList>
            <person name="Mullen A.C."/>
            <person name="Hutchins A.S."/>
            <person name="High F.A."/>
            <person name="Lee H.W."/>
            <person name="Sykes K.J."/>
            <person name="Chodosh L.A."/>
            <person name="Reiner S.L."/>
        </authorList>
    </citation>
    <scope>FUNCTION</scope>
    <scope>TISSUE SPECIFICITY</scope>
    <scope>INDUCTION</scope>
    <scope>DISRUPTION PHENOTYPE</scope>
</reference>
<comment type="function">
    <text evidence="3">Transcription factor required for TBX21/T-bet-dependent maturation of Th1 cells as well as maintenance of Th1-specific gene expression. Involved in embryogenesis and hematopoiesis.</text>
</comment>
<comment type="subcellular location">
    <subcellularLocation>
        <location evidence="4">Nucleus</location>
    </subcellularLocation>
</comment>
<comment type="tissue specificity">
    <text evidence="3">Expressed in Th1 cells, CD8-positive T-cells, B-cells and NK cells.</text>
</comment>
<comment type="induction">
    <text evidence="3">By TBX21 in developing as well as mature Th1 cells.</text>
</comment>
<comment type="disruption phenotype">
    <text evidence="3">Th1 cells lacking Hlx or Tbx21 fail to express normal levels of the Th1-specific cytokine Ifng.</text>
</comment>
<comment type="similarity">
    <text evidence="4">Belongs to the H2.0 homeobox family.</text>
</comment>
<evidence type="ECO:0000255" key="1">
    <source>
        <dbReference type="PROSITE-ProRule" id="PRU00108"/>
    </source>
</evidence>
<evidence type="ECO:0000256" key="2">
    <source>
        <dbReference type="SAM" id="MobiDB-lite"/>
    </source>
</evidence>
<evidence type="ECO:0000269" key="3">
    <source>
    </source>
</evidence>
<evidence type="ECO:0000305" key="4"/>
<proteinExistence type="evidence at transcript level"/>
<protein>
    <recommendedName>
        <fullName>H2.0-like homeobox protein</fullName>
    </recommendedName>
    <alternativeName>
        <fullName>Homeobox protein HLX1</fullName>
    </alternativeName>
</protein>
<name>HLX_MOUSE</name>
<keyword id="KW-0221">Differentiation</keyword>
<keyword id="KW-0238">DNA-binding</keyword>
<keyword id="KW-0371">Homeobox</keyword>
<keyword id="KW-0539">Nucleus</keyword>
<keyword id="KW-1185">Reference proteome</keyword>
<keyword id="KW-0804">Transcription</keyword>
<keyword id="KW-0805">Transcription regulation</keyword>
<accession>Q61670</accession>
<feature type="chain" id="PRO_0000048979" description="H2.0-like homeobox protein">
    <location>
        <begin position="1"/>
        <end position="476"/>
    </location>
</feature>
<feature type="DNA-binding region" description="Homeobox" evidence="1">
    <location>
        <begin position="273"/>
        <end position="332"/>
    </location>
</feature>
<feature type="region of interest" description="Disordered" evidence="2">
    <location>
        <begin position="120"/>
        <end position="169"/>
    </location>
</feature>
<feature type="region of interest" description="Disordered" evidence="2">
    <location>
        <begin position="328"/>
        <end position="401"/>
    </location>
</feature>
<feature type="region of interest" description="Disordered" evidence="2">
    <location>
        <begin position="413"/>
        <end position="476"/>
    </location>
</feature>
<feature type="compositionally biased region" description="Low complexity" evidence="2">
    <location>
        <begin position="123"/>
        <end position="134"/>
    </location>
</feature>
<feature type="compositionally biased region" description="Low complexity" evidence="2">
    <location>
        <begin position="158"/>
        <end position="168"/>
    </location>
</feature>
<feature type="compositionally biased region" description="Basic and acidic residues" evidence="2">
    <location>
        <begin position="331"/>
        <end position="346"/>
    </location>
</feature>
<feature type="compositionally biased region" description="Basic and acidic residues" evidence="2">
    <location>
        <begin position="355"/>
        <end position="368"/>
    </location>
</feature>
<feature type="compositionally biased region" description="Acidic residues" evidence="2">
    <location>
        <begin position="369"/>
        <end position="379"/>
    </location>
</feature>
<feature type="compositionally biased region" description="Basic and acidic residues" evidence="2">
    <location>
        <begin position="386"/>
        <end position="397"/>
    </location>
</feature>
<feature type="compositionally biased region" description="Low complexity" evidence="2">
    <location>
        <begin position="413"/>
        <end position="434"/>
    </location>
</feature>
<feature type="compositionally biased region" description="Polar residues" evidence="2">
    <location>
        <begin position="435"/>
        <end position="446"/>
    </location>
</feature>
<feature type="compositionally biased region" description="Polar residues" evidence="2">
    <location>
        <begin position="455"/>
        <end position="467"/>
    </location>
</feature>
<organism>
    <name type="scientific">Mus musculus</name>
    <name type="common">Mouse</name>
    <dbReference type="NCBI Taxonomy" id="10090"/>
    <lineage>
        <taxon>Eukaryota</taxon>
        <taxon>Metazoa</taxon>
        <taxon>Chordata</taxon>
        <taxon>Craniata</taxon>
        <taxon>Vertebrata</taxon>
        <taxon>Euteleostomi</taxon>
        <taxon>Mammalia</taxon>
        <taxon>Eutheria</taxon>
        <taxon>Euarchontoglires</taxon>
        <taxon>Glires</taxon>
        <taxon>Rodentia</taxon>
        <taxon>Myomorpha</taxon>
        <taxon>Muroidea</taxon>
        <taxon>Muridae</taxon>
        <taxon>Murinae</taxon>
        <taxon>Mus</taxon>
        <taxon>Mus</taxon>
    </lineage>
</organism>
<sequence>MFAAGLAPFYASNFSLWSAAYCSSAGPGGCSFALDPAAVKKPSFCIADILHAGVGEPGPAAEGLVGASAALTAHLGSVHPHASFQAAARSPLRPTPVVAPSEVPAGFPQRLSPLSAAFHQHLPQQSPTQQQQPQQQPPPPPRAVSLQPPTSGTRVVPHHSGSAPAPSSKDLKFGIDRILSAEFDPKVKEGNTLRDLTSLLTGGRPAGVHLAGLQPSAGQFFASLDPISEASAILSPLSSNPRNSVQHQFQDTFPGPYAVLTKDTMPQTYKRKRSWSRAVFSNLQRKGLEKRFEIQKYVTKPDRKQLAAMLGLTDAQVKVWFQNRRMKWRHSKEAQAQKDKDKEAGEKPSGGVPAEGEREERSPSRSEGEAESESSDSESLDMAPSDTERTEGTERSLHQTTVIKASAAGALITASSSTSGSSFSFSSTSSLGSGNTHVGSASSLGGNCSELPSAHQPSVTSSPQSPEIAQAPLAGL</sequence>
<gene>
    <name type="primary">Hlx</name>
    <name type="synonym">Hlx1</name>
</gene>
<dbReference type="EMBL" id="X58250">
    <property type="protein sequence ID" value="CAA41204.1"/>
    <property type="molecule type" value="mRNA"/>
</dbReference>
<dbReference type="CCDS" id="CCDS15593.1"/>
<dbReference type="PIR" id="A39621">
    <property type="entry name" value="A39621"/>
</dbReference>
<dbReference type="RefSeq" id="NP_032276.1">
    <property type="nucleotide sequence ID" value="NM_008250.2"/>
</dbReference>
<dbReference type="SMR" id="Q61670"/>
<dbReference type="FunCoup" id="Q61670">
    <property type="interactions" value="150"/>
</dbReference>
<dbReference type="STRING" id="10090.ENSMUSP00000040505"/>
<dbReference type="GlyGen" id="Q61670">
    <property type="glycosylation" value="1 site"/>
</dbReference>
<dbReference type="iPTMnet" id="Q61670"/>
<dbReference type="PhosphoSitePlus" id="Q61670"/>
<dbReference type="PaxDb" id="10090-ENSMUSP00000040505"/>
<dbReference type="ProteomicsDB" id="273364"/>
<dbReference type="Pumba" id="Q61670"/>
<dbReference type="Antibodypedia" id="910">
    <property type="antibodies" value="258 antibodies from 32 providers"/>
</dbReference>
<dbReference type="DNASU" id="15284"/>
<dbReference type="Ensembl" id="ENSMUST00000048572.7">
    <property type="protein sequence ID" value="ENSMUSP00000040505.7"/>
    <property type="gene ID" value="ENSMUSG00000039377.8"/>
</dbReference>
<dbReference type="GeneID" id="15284"/>
<dbReference type="KEGG" id="mmu:15284"/>
<dbReference type="UCSC" id="uc007dyn.2">
    <property type="organism name" value="mouse"/>
</dbReference>
<dbReference type="AGR" id="MGI:96109"/>
<dbReference type="CTD" id="3142"/>
<dbReference type="MGI" id="MGI:96109">
    <property type="gene designation" value="Hlx"/>
</dbReference>
<dbReference type="VEuPathDB" id="HostDB:ENSMUSG00000039377"/>
<dbReference type="eggNOG" id="KOG0488">
    <property type="taxonomic scope" value="Eukaryota"/>
</dbReference>
<dbReference type="GeneTree" id="ENSGT00950000183093"/>
<dbReference type="HOGENOM" id="CLU_043671_1_0_1"/>
<dbReference type="InParanoid" id="Q61670"/>
<dbReference type="OMA" id="VHHGGPF"/>
<dbReference type="OrthoDB" id="6159439at2759"/>
<dbReference type="PhylomeDB" id="Q61670"/>
<dbReference type="TreeFam" id="TF350735"/>
<dbReference type="BioGRID-ORCS" id="15284">
    <property type="hits" value="2 hits in 78 CRISPR screens"/>
</dbReference>
<dbReference type="ChiTaRS" id="Hlx">
    <property type="organism name" value="mouse"/>
</dbReference>
<dbReference type="PRO" id="PR:Q61670"/>
<dbReference type="Proteomes" id="UP000000589">
    <property type="component" value="Chromosome 1"/>
</dbReference>
<dbReference type="RNAct" id="Q61670">
    <property type="molecule type" value="protein"/>
</dbReference>
<dbReference type="Bgee" id="ENSMUSG00000039377">
    <property type="expression patterns" value="Expressed in granulocyte and 162 other cell types or tissues"/>
</dbReference>
<dbReference type="ExpressionAtlas" id="Q61670">
    <property type="expression patterns" value="baseline and differential"/>
</dbReference>
<dbReference type="GO" id="GO:0005634">
    <property type="term" value="C:nucleus"/>
    <property type="evidence" value="ECO:0007669"/>
    <property type="project" value="UniProtKB-SubCell"/>
</dbReference>
<dbReference type="GO" id="GO:0000981">
    <property type="term" value="F:DNA-binding transcription factor activity, RNA polymerase II-specific"/>
    <property type="evidence" value="ECO:0007669"/>
    <property type="project" value="InterPro"/>
</dbReference>
<dbReference type="GO" id="GO:0043565">
    <property type="term" value="F:sequence-specific DNA binding"/>
    <property type="evidence" value="ECO:0000266"/>
    <property type="project" value="MGI"/>
</dbReference>
<dbReference type="GO" id="GO:0048513">
    <property type="term" value="P:animal organ development"/>
    <property type="evidence" value="ECO:0000315"/>
    <property type="project" value="MGI"/>
</dbReference>
<dbReference type="GO" id="GO:0008283">
    <property type="term" value="P:cell population proliferation"/>
    <property type="evidence" value="ECO:0000315"/>
    <property type="project" value="MGI"/>
</dbReference>
<dbReference type="GO" id="GO:0048557">
    <property type="term" value="P:embryonic digestive tract morphogenesis"/>
    <property type="evidence" value="ECO:0000315"/>
    <property type="project" value="MGI"/>
</dbReference>
<dbReference type="GO" id="GO:0048484">
    <property type="term" value="P:enteric nervous system development"/>
    <property type="evidence" value="ECO:0000315"/>
    <property type="project" value="MGI"/>
</dbReference>
<dbReference type="GO" id="GO:0050673">
    <property type="term" value="P:epithelial cell proliferation"/>
    <property type="evidence" value="ECO:0000315"/>
    <property type="project" value="MGI"/>
</dbReference>
<dbReference type="GO" id="GO:0001889">
    <property type="term" value="P:liver development"/>
    <property type="evidence" value="ECO:0000315"/>
    <property type="project" value="MGI"/>
</dbReference>
<dbReference type="GO" id="GO:0045629">
    <property type="term" value="P:negative regulation of T-helper 2 cell differentiation"/>
    <property type="evidence" value="ECO:0000315"/>
    <property type="project" value="MGI"/>
</dbReference>
<dbReference type="GO" id="GO:0035265">
    <property type="term" value="P:organ growth"/>
    <property type="evidence" value="ECO:0000315"/>
    <property type="project" value="MGI"/>
</dbReference>
<dbReference type="GO" id="GO:0050679">
    <property type="term" value="P:positive regulation of epithelial cell proliferation"/>
    <property type="evidence" value="ECO:0000315"/>
    <property type="project" value="MGI"/>
</dbReference>
<dbReference type="GO" id="GO:0046622">
    <property type="term" value="P:positive regulation of organ growth"/>
    <property type="evidence" value="ECO:0000315"/>
    <property type="project" value="MGI"/>
</dbReference>
<dbReference type="GO" id="GO:0045627">
    <property type="term" value="P:positive regulation of T-helper 1 cell differentiation"/>
    <property type="evidence" value="ECO:0000315"/>
    <property type="project" value="MGI"/>
</dbReference>
<dbReference type="GO" id="GO:0007519">
    <property type="term" value="P:skeletal muscle tissue development"/>
    <property type="evidence" value="ECO:0000315"/>
    <property type="project" value="MGI"/>
</dbReference>
<dbReference type="GO" id="GO:0045063">
    <property type="term" value="P:T-helper 1 cell differentiation"/>
    <property type="evidence" value="ECO:0000315"/>
    <property type="project" value="MGI"/>
</dbReference>
<dbReference type="GO" id="GO:0045064">
    <property type="term" value="P:T-helper 2 cell differentiation"/>
    <property type="evidence" value="ECO:0000315"/>
    <property type="project" value="MGI"/>
</dbReference>
<dbReference type="CDD" id="cd00086">
    <property type="entry name" value="homeodomain"/>
    <property type="match status" value="1"/>
</dbReference>
<dbReference type="FunFam" id="1.10.10.60:FF:000249">
    <property type="entry name" value="H2.0-like homeobox protein"/>
    <property type="match status" value="1"/>
</dbReference>
<dbReference type="Gene3D" id="1.10.10.60">
    <property type="entry name" value="Homeodomain-like"/>
    <property type="match status" value="1"/>
</dbReference>
<dbReference type="InterPro" id="IPR052497">
    <property type="entry name" value="H2.0_Homeobox_TF"/>
</dbReference>
<dbReference type="InterPro" id="IPR001356">
    <property type="entry name" value="HD"/>
</dbReference>
<dbReference type="InterPro" id="IPR020479">
    <property type="entry name" value="HD_metazoa"/>
</dbReference>
<dbReference type="InterPro" id="IPR017970">
    <property type="entry name" value="Homeobox_CS"/>
</dbReference>
<dbReference type="InterPro" id="IPR009057">
    <property type="entry name" value="Homeodomain-like_sf"/>
</dbReference>
<dbReference type="InterPro" id="IPR000047">
    <property type="entry name" value="HTH_motif"/>
</dbReference>
<dbReference type="PANTHER" id="PTHR46808">
    <property type="entry name" value="H2.0-LIKE HOMEOBOX PROTEIN"/>
    <property type="match status" value="1"/>
</dbReference>
<dbReference type="PANTHER" id="PTHR46808:SF1">
    <property type="entry name" value="H2.0-LIKE HOMEOBOX PROTEIN"/>
    <property type="match status" value="1"/>
</dbReference>
<dbReference type="Pfam" id="PF00046">
    <property type="entry name" value="Homeodomain"/>
    <property type="match status" value="1"/>
</dbReference>
<dbReference type="PRINTS" id="PR00024">
    <property type="entry name" value="HOMEOBOX"/>
</dbReference>
<dbReference type="PRINTS" id="PR00031">
    <property type="entry name" value="HTHREPRESSR"/>
</dbReference>
<dbReference type="SMART" id="SM00389">
    <property type="entry name" value="HOX"/>
    <property type="match status" value="1"/>
</dbReference>
<dbReference type="SUPFAM" id="SSF46689">
    <property type="entry name" value="Homeodomain-like"/>
    <property type="match status" value="1"/>
</dbReference>
<dbReference type="PROSITE" id="PS00027">
    <property type="entry name" value="HOMEOBOX_1"/>
    <property type="match status" value="1"/>
</dbReference>
<dbReference type="PROSITE" id="PS50071">
    <property type="entry name" value="HOMEOBOX_2"/>
    <property type="match status" value="1"/>
</dbReference>